<gene>
    <name type="primary">SUB1</name>
</gene>
<protein>
    <recommendedName>
        <fullName>Subtilisin-like protease 1</fullName>
        <ecNumber>3.4.21.-</ecNumber>
    </recommendedName>
</protein>
<reference key="1">
    <citation type="journal article" date="2004" name="Gene">
        <title>Secreted subtilisin gene family in Trichophyton rubrum.</title>
        <authorList>
            <person name="Jousson O."/>
            <person name="Lechenne B."/>
            <person name="Bontems O."/>
            <person name="Mignon B."/>
            <person name="Reichard U."/>
            <person name="Barblan J."/>
            <person name="Quadroni M."/>
            <person name="Monod M."/>
        </authorList>
    </citation>
    <scope>NUCLEOTIDE SEQUENCE [GENOMIC DNA]</scope>
</reference>
<accession>Q64K30</accession>
<sequence>MGVFRFISISLAAVSAANAAQILSMPHAQTVPNSYIVMMKDDTSDDDFNHHQSWLQSTHTHNITRRATIQNAGMRHKYNFSKMKGYSGIFDEETIKDIAKDPKVMFVEPDTIISVHGKVEQSNVPSWGLARISNPQPGAGSYIYDSSAGEGITVYSVDTGVDVNHEDFEGRAIWGSNQVNDGDDRDGSGHGTHTSGTMVGKEFGIAKKAKLVAVKVLGNDGSGPTSGIVAGINWSVEHARQNGGTKKAVMNMSLGGSSSSALNRAAAQAVEQGMFLSVAAGNDNQDAQSSSPASEPSVCTVGSSAEDDSRSSFSNWGPAIDLFAPGSNIISARPGGGSQSMSGTSMAAPHVAGLAAYLMALEGISGGAVCDRLKELGTSSITDAGPGTPTNVLINNGGA</sequence>
<proteinExistence type="inferred from homology"/>
<keyword id="KW-0325">Glycoprotein</keyword>
<keyword id="KW-0378">Hydrolase</keyword>
<keyword id="KW-0645">Protease</keyword>
<keyword id="KW-0964">Secreted</keyword>
<keyword id="KW-0720">Serine protease</keyword>
<keyword id="KW-0732">Signal</keyword>
<keyword id="KW-0843">Virulence</keyword>
<keyword id="KW-0865">Zymogen</keyword>
<evidence type="ECO:0000250" key="1"/>
<evidence type="ECO:0000255" key="2"/>
<evidence type="ECO:0000255" key="3">
    <source>
        <dbReference type="PROSITE-ProRule" id="PRU01240"/>
    </source>
</evidence>
<evidence type="ECO:0000256" key="4">
    <source>
        <dbReference type="SAM" id="MobiDB-lite"/>
    </source>
</evidence>
<evidence type="ECO:0000305" key="5"/>
<dbReference type="EC" id="3.4.21.-"/>
<dbReference type="EMBL" id="AY437858">
    <property type="protein sequence ID" value="AAS45672.1"/>
    <property type="molecule type" value="Genomic_DNA"/>
</dbReference>
<dbReference type="SMR" id="Q64K30"/>
<dbReference type="MEROPS" id="S08.025"/>
<dbReference type="GlyCosmos" id="Q64K30">
    <property type="glycosylation" value="1 site, No reported glycans"/>
</dbReference>
<dbReference type="GO" id="GO:0005576">
    <property type="term" value="C:extracellular region"/>
    <property type="evidence" value="ECO:0007669"/>
    <property type="project" value="UniProtKB-SubCell"/>
</dbReference>
<dbReference type="GO" id="GO:0004252">
    <property type="term" value="F:serine-type endopeptidase activity"/>
    <property type="evidence" value="ECO:0007669"/>
    <property type="project" value="InterPro"/>
</dbReference>
<dbReference type="GO" id="GO:0006508">
    <property type="term" value="P:proteolysis"/>
    <property type="evidence" value="ECO:0007669"/>
    <property type="project" value="UniProtKB-KW"/>
</dbReference>
<dbReference type="CDD" id="cd04077">
    <property type="entry name" value="Peptidases_S8_PCSK9_ProteinaseK_like"/>
    <property type="match status" value="1"/>
</dbReference>
<dbReference type="FunFam" id="3.40.50.200:FF:000014">
    <property type="entry name" value="Proteinase K"/>
    <property type="match status" value="1"/>
</dbReference>
<dbReference type="Gene3D" id="3.30.70.80">
    <property type="entry name" value="Peptidase S8 propeptide/proteinase inhibitor I9"/>
    <property type="match status" value="1"/>
</dbReference>
<dbReference type="Gene3D" id="3.40.50.200">
    <property type="entry name" value="Peptidase S8/S53 domain"/>
    <property type="match status" value="1"/>
</dbReference>
<dbReference type="InterPro" id="IPR034193">
    <property type="entry name" value="PCSK9_ProteinaseK-like"/>
</dbReference>
<dbReference type="InterPro" id="IPR000209">
    <property type="entry name" value="Peptidase_S8/S53_dom"/>
</dbReference>
<dbReference type="InterPro" id="IPR036852">
    <property type="entry name" value="Peptidase_S8/S53_dom_sf"/>
</dbReference>
<dbReference type="InterPro" id="IPR023828">
    <property type="entry name" value="Peptidase_S8_Ser-AS"/>
</dbReference>
<dbReference type="InterPro" id="IPR050131">
    <property type="entry name" value="Peptidase_S8_subtilisin-like"/>
</dbReference>
<dbReference type="InterPro" id="IPR015500">
    <property type="entry name" value="Peptidase_S8_subtilisin-rel"/>
</dbReference>
<dbReference type="InterPro" id="IPR010259">
    <property type="entry name" value="S8pro/Inhibitor_I9"/>
</dbReference>
<dbReference type="InterPro" id="IPR037045">
    <property type="entry name" value="S8pro/Inhibitor_I9_sf"/>
</dbReference>
<dbReference type="PANTHER" id="PTHR43806:SF58">
    <property type="entry name" value="ALKALINE PROTEASE 1-RELATED"/>
    <property type="match status" value="1"/>
</dbReference>
<dbReference type="PANTHER" id="PTHR43806">
    <property type="entry name" value="PEPTIDASE S8"/>
    <property type="match status" value="1"/>
</dbReference>
<dbReference type="Pfam" id="PF05922">
    <property type="entry name" value="Inhibitor_I9"/>
    <property type="match status" value="1"/>
</dbReference>
<dbReference type="Pfam" id="PF00082">
    <property type="entry name" value="Peptidase_S8"/>
    <property type="match status" value="1"/>
</dbReference>
<dbReference type="PRINTS" id="PR00723">
    <property type="entry name" value="SUBTILISIN"/>
</dbReference>
<dbReference type="SUPFAM" id="SSF54897">
    <property type="entry name" value="Protease propeptides/inhibitors"/>
    <property type="match status" value="1"/>
</dbReference>
<dbReference type="SUPFAM" id="SSF52743">
    <property type="entry name" value="Subtilisin-like"/>
    <property type="match status" value="1"/>
</dbReference>
<dbReference type="PROSITE" id="PS51892">
    <property type="entry name" value="SUBTILASE"/>
    <property type="match status" value="1"/>
</dbReference>
<dbReference type="PROSITE" id="PS00138">
    <property type="entry name" value="SUBTILASE_SER"/>
    <property type="match status" value="1"/>
</dbReference>
<feature type="signal peptide" evidence="2">
    <location>
        <begin position="1"/>
        <end position="19"/>
    </location>
</feature>
<feature type="propeptide" id="PRO_0000380754" evidence="1">
    <location>
        <begin position="20"/>
        <end position="116"/>
    </location>
</feature>
<feature type="chain" id="PRO_0000380755" description="Subtilisin-like protease 1">
    <location>
        <begin position="117"/>
        <end position="399" status="greater than"/>
    </location>
</feature>
<feature type="domain" description="Inhibitor I9" evidence="2">
    <location>
        <begin position="34"/>
        <end position="115"/>
    </location>
</feature>
<feature type="domain" description="Peptidase S8" evidence="3">
    <location>
        <begin position="126"/>
        <end position="399"/>
    </location>
</feature>
<feature type="region of interest" description="Disordered" evidence="4">
    <location>
        <begin position="175"/>
        <end position="198"/>
    </location>
</feature>
<feature type="region of interest" description="Disordered" evidence="4">
    <location>
        <begin position="282"/>
        <end position="312"/>
    </location>
</feature>
<feature type="compositionally biased region" description="Polar residues" evidence="4">
    <location>
        <begin position="282"/>
        <end position="294"/>
    </location>
</feature>
<feature type="active site" description="Charge relay system" evidence="3">
    <location>
        <position position="158"/>
    </location>
</feature>
<feature type="active site" description="Charge relay system" evidence="3">
    <location>
        <position position="190"/>
    </location>
</feature>
<feature type="active site" description="Charge relay system" evidence="3">
    <location>
        <position position="345"/>
    </location>
</feature>
<feature type="glycosylation site" description="N-linked (GlcNAc...) asparagine" evidence="2">
    <location>
        <position position="251"/>
    </location>
</feature>
<feature type="non-terminal residue">
    <location>
        <position position="399"/>
    </location>
</feature>
<comment type="function">
    <text evidence="1">Secreted subtilisin-like serine protease with keratinolytic activity that contributes to pathogenicity.</text>
</comment>
<comment type="subcellular location">
    <subcellularLocation>
        <location evidence="1">Secreted</location>
    </subcellularLocation>
</comment>
<comment type="similarity">
    <text evidence="5">Belongs to the peptidase S8 family.</text>
</comment>
<name>SUB1_ARTBE</name>
<organism>
    <name type="scientific">Arthroderma benhamiae</name>
    <name type="common">Trichophyton mentagrophytes</name>
    <dbReference type="NCBI Taxonomy" id="63400"/>
    <lineage>
        <taxon>Eukaryota</taxon>
        <taxon>Fungi</taxon>
        <taxon>Dikarya</taxon>
        <taxon>Ascomycota</taxon>
        <taxon>Pezizomycotina</taxon>
        <taxon>Eurotiomycetes</taxon>
        <taxon>Eurotiomycetidae</taxon>
        <taxon>Onygenales</taxon>
        <taxon>Arthrodermataceae</taxon>
        <taxon>Trichophyton</taxon>
    </lineage>
</organism>